<dbReference type="EC" id="1.4.4.2" evidence="1"/>
<dbReference type="EMBL" id="AP010918">
    <property type="protein sequence ID" value="BAH26138.1"/>
    <property type="molecule type" value="Genomic_DNA"/>
</dbReference>
<dbReference type="RefSeq" id="WP_010950613.1">
    <property type="nucleotide sequence ID" value="NZ_CP014566.1"/>
</dbReference>
<dbReference type="SMR" id="C1APA9"/>
<dbReference type="KEGG" id="mbt:JTY_1851"/>
<dbReference type="HOGENOM" id="CLU_004620_2_2_11"/>
<dbReference type="GO" id="GO:0005829">
    <property type="term" value="C:cytosol"/>
    <property type="evidence" value="ECO:0007669"/>
    <property type="project" value="TreeGrafter"/>
</dbReference>
<dbReference type="GO" id="GO:0005960">
    <property type="term" value="C:glycine cleavage complex"/>
    <property type="evidence" value="ECO:0007669"/>
    <property type="project" value="TreeGrafter"/>
</dbReference>
<dbReference type="GO" id="GO:0016594">
    <property type="term" value="F:glycine binding"/>
    <property type="evidence" value="ECO:0007669"/>
    <property type="project" value="TreeGrafter"/>
</dbReference>
<dbReference type="GO" id="GO:0004375">
    <property type="term" value="F:glycine dehydrogenase (decarboxylating) activity"/>
    <property type="evidence" value="ECO:0007669"/>
    <property type="project" value="UniProtKB-EC"/>
</dbReference>
<dbReference type="GO" id="GO:0030170">
    <property type="term" value="F:pyridoxal phosphate binding"/>
    <property type="evidence" value="ECO:0007669"/>
    <property type="project" value="TreeGrafter"/>
</dbReference>
<dbReference type="GO" id="GO:0019464">
    <property type="term" value="P:glycine decarboxylation via glycine cleavage system"/>
    <property type="evidence" value="ECO:0007669"/>
    <property type="project" value="UniProtKB-UniRule"/>
</dbReference>
<dbReference type="CDD" id="cd00613">
    <property type="entry name" value="GDC-P"/>
    <property type="match status" value="2"/>
</dbReference>
<dbReference type="FunFam" id="3.90.1150.10:FF:000059">
    <property type="entry name" value="Glycine dehydrogenase (decarboxylating)"/>
    <property type="match status" value="1"/>
</dbReference>
<dbReference type="FunFam" id="3.40.640.10:FF:000005">
    <property type="entry name" value="Glycine dehydrogenase (decarboxylating), mitochondrial"/>
    <property type="match status" value="1"/>
</dbReference>
<dbReference type="FunFam" id="3.40.640.10:FF:000007">
    <property type="entry name" value="glycine dehydrogenase (Decarboxylating), mitochondrial"/>
    <property type="match status" value="1"/>
</dbReference>
<dbReference type="Gene3D" id="3.90.1150.10">
    <property type="entry name" value="Aspartate Aminotransferase, domain 1"/>
    <property type="match status" value="2"/>
</dbReference>
<dbReference type="Gene3D" id="3.40.640.10">
    <property type="entry name" value="Type I PLP-dependent aspartate aminotransferase-like (Major domain)"/>
    <property type="match status" value="2"/>
</dbReference>
<dbReference type="HAMAP" id="MF_00711">
    <property type="entry name" value="GcvP"/>
    <property type="match status" value="1"/>
</dbReference>
<dbReference type="InterPro" id="IPR003437">
    <property type="entry name" value="GcvP"/>
</dbReference>
<dbReference type="InterPro" id="IPR049316">
    <property type="entry name" value="GDC-P_C"/>
</dbReference>
<dbReference type="InterPro" id="IPR049315">
    <property type="entry name" value="GDC-P_N"/>
</dbReference>
<dbReference type="InterPro" id="IPR020581">
    <property type="entry name" value="GDC_P"/>
</dbReference>
<dbReference type="InterPro" id="IPR015424">
    <property type="entry name" value="PyrdxlP-dep_Trfase"/>
</dbReference>
<dbReference type="InterPro" id="IPR015421">
    <property type="entry name" value="PyrdxlP-dep_Trfase_major"/>
</dbReference>
<dbReference type="InterPro" id="IPR015422">
    <property type="entry name" value="PyrdxlP-dep_Trfase_small"/>
</dbReference>
<dbReference type="NCBIfam" id="TIGR00461">
    <property type="entry name" value="gcvP"/>
    <property type="match status" value="1"/>
</dbReference>
<dbReference type="PANTHER" id="PTHR11773:SF1">
    <property type="entry name" value="GLYCINE DEHYDROGENASE (DECARBOXYLATING), MITOCHONDRIAL"/>
    <property type="match status" value="1"/>
</dbReference>
<dbReference type="PANTHER" id="PTHR11773">
    <property type="entry name" value="GLYCINE DEHYDROGENASE, DECARBOXYLATING"/>
    <property type="match status" value="1"/>
</dbReference>
<dbReference type="Pfam" id="PF21478">
    <property type="entry name" value="GcvP2_C"/>
    <property type="match status" value="1"/>
</dbReference>
<dbReference type="Pfam" id="PF02347">
    <property type="entry name" value="GDC-P"/>
    <property type="match status" value="2"/>
</dbReference>
<dbReference type="SUPFAM" id="SSF53383">
    <property type="entry name" value="PLP-dependent transferases"/>
    <property type="match status" value="2"/>
</dbReference>
<keyword id="KW-0560">Oxidoreductase</keyword>
<keyword id="KW-0663">Pyridoxal phosphate</keyword>
<name>GCSP_MYCBT</name>
<feature type="chain" id="PRO_1000147966" description="Glycine dehydrogenase (decarboxylating)">
    <location>
        <begin position="1"/>
        <end position="941"/>
    </location>
</feature>
<feature type="modified residue" description="N6-(pyridoxal phosphate)lysine" evidence="1">
    <location>
        <position position="692"/>
    </location>
</feature>
<accession>C1APA9</accession>
<organism>
    <name type="scientific">Mycobacterium bovis (strain BCG / Tokyo 172 / ATCC 35737 / TMC 1019)</name>
    <dbReference type="NCBI Taxonomy" id="561275"/>
    <lineage>
        <taxon>Bacteria</taxon>
        <taxon>Bacillati</taxon>
        <taxon>Actinomycetota</taxon>
        <taxon>Actinomycetes</taxon>
        <taxon>Mycobacteriales</taxon>
        <taxon>Mycobacteriaceae</taxon>
        <taxon>Mycobacterium</taxon>
        <taxon>Mycobacterium tuberculosis complex</taxon>
    </lineage>
</organism>
<comment type="function">
    <text evidence="1">The glycine cleavage system catalyzes the degradation of glycine. The P protein binds the alpha-amino group of glycine through its pyridoxal phosphate cofactor; CO(2) is released and the remaining methylamine moiety is then transferred to the lipoamide cofactor of the H protein.</text>
</comment>
<comment type="catalytic activity">
    <reaction evidence="1">
        <text>N(6)-[(R)-lipoyl]-L-lysyl-[glycine-cleavage complex H protein] + glycine + H(+) = N(6)-[(R)-S(8)-aminomethyldihydrolipoyl]-L-lysyl-[glycine-cleavage complex H protein] + CO2</text>
        <dbReference type="Rhea" id="RHEA:24304"/>
        <dbReference type="Rhea" id="RHEA-COMP:10494"/>
        <dbReference type="Rhea" id="RHEA-COMP:10495"/>
        <dbReference type="ChEBI" id="CHEBI:15378"/>
        <dbReference type="ChEBI" id="CHEBI:16526"/>
        <dbReference type="ChEBI" id="CHEBI:57305"/>
        <dbReference type="ChEBI" id="CHEBI:83099"/>
        <dbReference type="ChEBI" id="CHEBI:83143"/>
        <dbReference type="EC" id="1.4.4.2"/>
    </reaction>
</comment>
<comment type="cofactor">
    <cofactor evidence="1">
        <name>pyridoxal 5'-phosphate</name>
        <dbReference type="ChEBI" id="CHEBI:597326"/>
    </cofactor>
</comment>
<comment type="subunit">
    <text evidence="1">The glycine cleavage system is composed of four proteins: P, T, L and H.</text>
</comment>
<comment type="similarity">
    <text evidence="1">Belongs to the GcvP family.</text>
</comment>
<gene>
    <name evidence="1" type="primary">gcvP</name>
    <name type="ordered locus">JTY_1851</name>
</gene>
<sequence>MSDHSTFADRHIGLDSQAVATMLAVIGVDSLDDLAVKAVPAGILDTLTDTGAAPGLDSLPPAASEAEALAELRALADANTVAVSMIGQGYYDTHTPPVLLRNIIENPAWYTAYTPYQPEISQGRLEALLNFQTLVTDLTGLEIANASMLDEGTAAAEAMTLMHRAARGPVKRVVVDADVFTQTAAVLATRAKPLGIEIVTADLRAGLPDGEFFGAIAQLPGASGRITDWSALVQQAHDRGALVAVGADLLALTLIAPPGEIGADVAFGTTQRFGVPMGFGGPHAGYLAVHAKHARQLPGRLVGVSVDSDGTPAYRLALQTREQHIRRDKATSNICTAQVLLAVLAAMYASYHGAGGLTAIARRVHAHAEAIAGALGDALVHDKYFDTVLARVPGRADEVLARAKANGINLWRVDADHVSVACDEATTDTHVAVVLDAFGVAAAAPAHADIATRTSEFLTHPAFTQYRTETSMMRYLRALADKDIALDRSMIPLGSCTMKLNAAAEMESITWPEFGRQHPFAPASDTAGLRQLVADLQSWLVLITGYDAVSLQPNAGSQGEYAGLLAIHEYHASRGEPHRDICLIPSSAHGTNAASAALAGMRVVVVDCHDNGDVDLDDLRAKVGEHAERLSALMITYPSTHGVYEHDIAEICAAVHDAGGQVYVDGANLNALVGLARPGKFGGDVSHLNLHKTFCIPHGGGGPGVGPVAVRAHLAPFLPGHPFAPELPKGYPVSSAPYGSASILPITWAYIRMMGAEGLRAASLTAITSANYIARRLDEYYPVLYTGENGMVAHECILDLRGITKLTGITVDDVAKRLADYGFHAPTMSFPVAGTLMVEPTESESLAEVDAFCEAMIGIRAEIDKVGAGEWPVDDNPLRGAPHTAQCLLASDWDHPYTREQAAYPLGTAFRPKVWPAVRRIDGAYGDRNLVCSCPPVEAFA</sequence>
<evidence type="ECO:0000255" key="1">
    <source>
        <dbReference type="HAMAP-Rule" id="MF_00711"/>
    </source>
</evidence>
<proteinExistence type="inferred from homology"/>
<protein>
    <recommendedName>
        <fullName evidence="1">Glycine dehydrogenase (decarboxylating)</fullName>
        <ecNumber evidence="1">1.4.4.2</ecNumber>
    </recommendedName>
    <alternativeName>
        <fullName evidence="1">Glycine cleavage system P-protein</fullName>
    </alternativeName>
    <alternativeName>
        <fullName evidence="1">Glycine decarboxylase</fullName>
    </alternativeName>
    <alternativeName>
        <fullName evidence="1">Glycine dehydrogenase (aminomethyl-transferring)</fullName>
    </alternativeName>
</protein>
<reference key="1">
    <citation type="journal article" date="2009" name="Vaccine">
        <title>Whole genome sequence analysis of Mycobacterium bovis bacillus Calmette-Guerin (BCG) Tokyo 172: a comparative study of BCG vaccine substrains.</title>
        <authorList>
            <person name="Seki M."/>
            <person name="Honda I."/>
            <person name="Fujita I."/>
            <person name="Yano I."/>
            <person name="Yamamoto S."/>
            <person name="Koyama A."/>
        </authorList>
    </citation>
    <scope>NUCLEOTIDE SEQUENCE [LARGE SCALE GENOMIC DNA]</scope>
    <source>
        <strain>BCG / Tokyo 172 / ATCC 35737 / TMC 1019</strain>
    </source>
</reference>